<reference key="1">
    <citation type="journal article" date="2001" name="Mol. Phylogenet. Evol.">
        <title>Molecular systematics of the family Mormoopidae (Chiroptera) based on cytochrome b and recombination activating gene 2 sequences.</title>
        <authorList>
            <person name="Lewis-Oritt N."/>
            <person name="Porter C.A."/>
            <person name="Baker R.J."/>
        </authorList>
    </citation>
    <scope>NUCLEOTIDE SEQUENCE [GENOMIC DNA]</scope>
    <source>
        <strain>Isolate TK 32166</strain>
        <strain>Isolate TK 9469</strain>
    </source>
</reference>
<accession>Q9B167</accession>
<comment type="function">
    <text evidence="2">Component of the ubiquinol-cytochrome c reductase complex (complex III or cytochrome b-c1 complex) that is part of the mitochondrial respiratory chain. The b-c1 complex mediates electron transfer from ubiquinol to cytochrome c. Contributes to the generation of a proton gradient across the mitochondrial membrane that is then used for ATP synthesis.</text>
</comment>
<comment type="cofactor">
    <cofactor evidence="2">
        <name>heme b</name>
        <dbReference type="ChEBI" id="CHEBI:60344"/>
    </cofactor>
    <text evidence="2">Binds 2 heme b groups non-covalently.</text>
</comment>
<comment type="subunit">
    <text evidence="2">The cytochrome bc1 complex contains 11 subunits: 3 respiratory subunits (MT-CYB, CYC1 and UQCRFS1), 2 core proteins (UQCRC1 and UQCRC2) and 6 low-molecular weight proteins (UQCRH/QCR6, UQCRB/QCR7, UQCRQ/QCR8, UQCR10/QCR9, UQCR11/QCR10 and a cleavage product of UQCRFS1). This cytochrome bc1 complex then forms a dimer.</text>
</comment>
<comment type="subcellular location">
    <subcellularLocation>
        <location evidence="2">Mitochondrion inner membrane</location>
        <topology evidence="2">Multi-pass membrane protein</topology>
    </subcellularLocation>
</comment>
<comment type="miscellaneous">
    <text evidence="1">Heme 1 (or BL or b562) is low-potential and absorbs at about 562 nm, and heme 2 (or BH or b566) is high-potential and absorbs at about 566 nm.</text>
</comment>
<comment type="similarity">
    <text evidence="3 4">Belongs to the cytochrome b family.</text>
</comment>
<comment type="caution">
    <text evidence="2">The full-length protein contains only eight transmembrane helices, not nine as predicted by bioinformatics tools.</text>
</comment>
<protein>
    <recommendedName>
        <fullName>Cytochrome b</fullName>
    </recommendedName>
    <alternativeName>
        <fullName>Complex III subunit 3</fullName>
    </alternativeName>
    <alternativeName>
        <fullName>Complex III subunit III</fullName>
    </alternativeName>
    <alternativeName>
        <fullName>Cytochrome b-c1 complex subunit 3</fullName>
    </alternativeName>
    <alternativeName>
        <fullName>Ubiquinol-cytochrome-c reductase complex cytochrome b subunit</fullName>
    </alternativeName>
</protein>
<name>CYB_MORBL</name>
<organism>
    <name type="scientific">Mormoops blainvillei</name>
    <name type="common">Antillean ghost-faced bat</name>
    <dbReference type="NCBI Taxonomy" id="118852"/>
    <lineage>
        <taxon>Eukaryota</taxon>
        <taxon>Metazoa</taxon>
        <taxon>Chordata</taxon>
        <taxon>Craniata</taxon>
        <taxon>Vertebrata</taxon>
        <taxon>Euteleostomi</taxon>
        <taxon>Mammalia</taxon>
        <taxon>Eutheria</taxon>
        <taxon>Laurasiatheria</taxon>
        <taxon>Chiroptera</taxon>
        <taxon>Yangochiroptera</taxon>
        <taxon>Mormoopidae</taxon>
        <taxon>Mormoops</taxon>
    </lineage>
</organism>
<proteinExistence type="inferred from homology"/>
<geneLocation type="mitochondrion"/>
<keyword id="KW-0249">Electron transport</keyword>
<keyword id="KW-0349">Heme</keyword>
<keyword id="KW-0408">Iron</keyword>
<keyword id="KW-0472">Membrane</keyword>
<keyword id="KW-0479">Metal-binding</keyword>
<keyword id="KW-0496">Mitochondrion</keyword>
<keyword id="KW-0999">Mitochondrion inner membrane</keyword>
<keyword id="KW-0679">Respiratory chain</keyword>
<keyword id="KW-0812">Transmembrane</keyword>
<keyword id="KW-1133">Transmembrane helix</keyword>
<keyword id="KW-0813">Transport</keyword>
<keyword id="KW-0830">Ubiquinone</keyword>
<dbReference type="EMBL" id="AF338686">
    <property type="protein sequence ID" value="AAK21946.1"/>
    <property type="molecule type" value="Genomic_DNA"/>
</dbReference>
<dbReference type="EMBL" id="AF338685">
    <property type="protein sequence ID" value="AAK21945.1"/>
    <property type="molecule type" value="Genomic_DNA"/>
</dbReference>
<dbReference type="SMR" id="Q9B167"/>
<dbReference type="GO" id="GO:0005743">
    <property type="term" value="C:mitochondrial inner membrane"/>
    <property type="evidence" value="ECO:0007669"/>
    <property type="project" value="UniProtKB-SubCell"/>
</dbReference>
<dbReference type="GO" id="GO:0045275">
    <property type="term" value="C:respiratory chain complex III"/>
    <property type="evidence" value="ECO:0007669"/>
    <property type="project" value="InterPro"/>
</dbReference>
<dbReference type="GO" id="GO:0046872">
    <property type="term" value="F:metal ion binding"/>
    <property type="evidence" value="ECO:0007669"/>
    <property type="project" value="UniProtKB-KW"/>
</dbReference>
<dbReference type="GO" id="GO:0008121">
    <property type="term" value="F:ubiquinol-cytochrome-c reductase activity"/>
    <property type="evidence" value="ECO:0007669"/>
    <property type="project" value="InterPro"/>
</dbReference>
<dbReference type="GO" id="GO:0006122">
    <property type="term" value="P:mitochondrial electron transport, ubiquinol to cytochrome c"/>
    <property type="evidence" value="ECO:0007669"/>
    <property type="project" value="TreeGrafter"/>
</dbReference>
<dbReference type="CDD" id="cd00290">
    <property type="entry name" value="cytochrome_b_C"/>
    <property type="match status" value="1"/>
</dbReference>
<dbReference type="CDD" id="cd00284">
    <property type="entry name" value="Cytochrome_b_N"/>
    <property type="match status" value="1"/>
</dbReference>
<dbReference type="FunFam" id="1.20.810.10:FF:000002">
    <property type="entry name" value="Cytochrome b"/>
    <property type="match status" value="1"/>
</dbReference>
<dbReference type="Gene3D" id="1.20.810.10">
    <property type="entry name" value="Cytochrome Bc1 Complex, Chain C"/>
    <property type="match status" value="1"/>
</dbReference>
<dbReference type="InterPro" id="IPR005798">
    <property type="entry name" value="Cyt_b/b6_C"/>
</dbReference>
<dbReference type="InterPro" id="IPR036150">
    <property type="entry name" value="Cyt_b/b6_C_sf"/>
</dbReference>
<dbReference type="InterPro" id="IPR005797">
    <property type="entry name" value="Cyt_b/b6_N"/>
</dbReference>
<dbReference type="InterPro" id="IPR027387">
    <property type="entry name" value="Cytb/b6-like_sf"/>
</dbReference>
<dbReference type="InterPro" id="IPR030689">
    <property type="entry name" value="Cytochrome_b"/>
</dbReference>
<dbReference type="InterPro" id="IPR048260">
    <property type="entry name" value="Cytochrome_b_C_euk/bac"/>
</dbReference>
<dbReference type="InterPro" id="IPR048259">
    <property type="entry name" value="Cytochrome_b_N_euk/bac"/>
</dbReference>
<dbReference type="InterPro" id="IPR016174">
    <property type="entry name" value="Di-haem_cyt_TM"/>
</dbReference>
<dbReference type="PANTHER" id="PTHR19271">
    <property type="entry name" value="CYTOCHROME B"/>
    <property type="match status" value="1"/>
</dbReference>
<dbReference type="PANTHER" id="PTHR19271:SF16">
    <property type="entry name" value="CYTOCHROME B"/>
    <property type="match status" value="1"/>
</dbReference>
<dbReference type="Pfam" id="PF00032">
    <property type="entry name" value="Cytochrom_B_C"/>
    <property type="match status" value="1"/>
</dbReference>
<dbReference type="Pfam" id="PF00033">
    <property type="entry name" value="Cytochrome_B"/>
    <property type="match status" value="1"/>
</dbReference>
<dbReference type="PIRSF" id="PIRSF038885">
    <property type="entry name" value="COB"/>
    <property type="match status" value="1"/>
</dbReference>
<dbReference type="SUPFAM" id="SSF81648">
    <property type="entry name" value="a domain/subunit of cytochrome bc1 complex (Ubiquinol-cytochrome c reductase)"/>
    <property type="match status" value="1"/>
</dbReference>
<dbReference type="SUPFAM" id="SSF81342">
    <property type="entry name" value="Transmembrane di-heme cytochromes"/>
    <property type="match status" value="1"/>
</dbReference>
<dbReference type="PROSITE" id="PS51003">
    <property type="entry name" value="CYTB_CTER"/>
    <property type="match status" value="1"/>
</dbReference>
<dbReference type="PROSITE" id="PS51002">
    <property type="entry name" value="CYTB_NTER"/>
    <property type="match status" value="1"/>
</dbReference>
<feature type="chain" id="PRO_0000061205" description="Cytochrome b">
    <location>
        <begin position="1"/>
        <end position="379"/>
    </location>
</feature>
<feature type="transmembrane region" description="Helical" evidence="2">
    <location>
        <begin position="33"/>
        <end position="53"/>
    </location>
</feature>
<feature type="transmembrane region" description="Helical" evidence="2">
    <location>
        <begin position="77"/>
        <end position="98"/>
    </location>
</feature>
<feature type="transmembrane region" description="Helical" evidence="2">
    <location>
        <begin position="113"/>
        <end position="133"/>
    </location>
</feature>
<feature type="transmembrane region" description="Helical" evidence="2">
    <location>
        <begin position="178"/>
        <end position="198"/>
    </location>
</feature>
<feature type="transmembrane region" description="Helical" evidence="2">
    <location>
        <begin position="226"/>
        <end position="246"/>
    </location>
</feature>
<feature type="transmembrane region" description="Helical" evidence="2">
    <location>
        <begin position="288"/>
        <end position="308"/>
    </location>
</feature>
<feature type="transmembrane region" description="Helical" evidence="2">
    <location>
        <begin position="320"/>
        <end position="340"/>
    </location>
</feature>
<feature type="transmembrane region" description="Helical" evidence="2">
    <location>
        <begin position="347"/>
        <end position="367"/>
    </location>
</feature>
<feature type="binding site" description="axial binding residue" evidence="2">
    <location>
        <position position="83"/>
    </location>
    <ligand>
        <name>heme b</name>
        <dbReference type="ChEBI" id="CHEBI:60344"/>
        <label>b562</label>
    </ligand>
    <ligandPart>
        <name>Fe</name>
        <dbReference type="ChEBI" id="CHEBI:18248"/>
    </ligandPart>
</feature>
<feature type="binding site" description="axial binding residue" evidence="2">
    <location>
        <position position="97"/>
    </location>
    <ligand>
        <name>heme b</name>
        <dbReference type="ChEBI" id="CHEBI:60344"/>
        <label>b566</label>
    </ligand>
    <ligandPart>
        <name>Fe</name>
        <dbReference type="ChEBI" id="CHEBI:18248"/>
    </ligandPart>
</feature>
<feature type="binding site" description="axial binding residue" evidence="2">
    <location>
        <position position="182"/>
    </location>
    <ligand>
        <name>heme b</name>
        <dbReference type="ChEBI" id="CHEBI:60344"/>
        <label>b562</label>
    </ligand>
    <ligandPart>
        <name>Fe</name>
        <dbReference type="ChEBI" id="CHEBI:18248"/>
    </ligandPart>
</feature>
<feature type="binding site" description="axial binding residue" evidence="2">
    <location>
        <position position="196"/>
    </location>
    <ligand>
        <name>heme b</name>
        <dbReference type="ChEBI" id="CHEBI:60344"/>
        <label>b566</label>
    </ligand>
    <ligandPart>
        <name>Fe</name>
        <dbReference type="ChEBI" id="CHEBI:18248"/>
    </ligandPart>
</feature>
<feature type="binding site" evidence="2">
    <location>
        <position position="201"/>
    </location>
    <ligand>
        <name>a ubiquinone</name>
        <dbReference type="ChEBI" id="CHEBI:16389"/>
    </ligand>
</feature>
<gene>
    <name type="primary">MT-CYB</name>
    <name type="synonym">COB</name>
    <name type="synonym">CYTB</name>
    <name type="synonym">MTCYB</name>
</gene>
<sequence length="379" mass="42559">MTNIRKTHPLLKIVNTSFVDLPAPSSLSSWWNFGSLLGICLGLQILTGLFLAMHYTSDTATAFNSVTHICRDVNYGWVLRYLHANGASMFFICLYLHVGRGLYYGSYTYSETWNIGIILLFAVMATAFMGYVLPWGQMSFWGATVITNLLSAIPYIGTDLVQWIWGGFSVDKATLTRFFAFHFLLPFIISALVMVHLLFLHETGSNNPTGIPSDSDMIPFHPYYTIKDILGFLLMLTALSALVLFSPDLLGDPDNYTPANPLNTPPHIKPEWYFLFAYAILRSIPNKLGGVLALVMSILILAVIPLIHTSKQQSMIFRPLSQCLFWLLVADLLTLTWIGGQPVEHPYIIIGQTASILYFLIILILMPLVSAMENYLLKW</sequence>
<evidence type="ECO:0000250" key="1"/>
<evidence type="ECO:0000250" key="2">
    <source>
        <dbReference type="UniProtKB" id="P00157"/>
    </source>
</evidence>
<evidence type="ECO:0000255" key="3">
    <source>
        <dbReference type="PROSITE-ProRule" id="PRU00967"/>
    </source>
</evidence>
<evidence type="ECO:0000255" key="4">
    <source>
        <dbReference type="PROSITE-ProRule" id="PRU00968"/>
    </source>
</evidence>